<accession>Q5P5L5</accession>
<gene>
    <name type="ordered locus">AZOSEA12720</name>
    <name type="ORF">ebA2303</name>
</gene>
<reference key="1">
    <citation type="journal article" date="2005" name="Arch. Microbiol.">
        <title>The genome sequence of an anaerobic aromatic-degrading denitrifying bacterium, strain EbN1.</title>
        <authorList>
            <person name="Rabus R."/>
            <person name="Kube M."/>
            <person name="Heider J."/>
            <person name="Beck A."/>
            <person name="Heitmann K."/>
            <person name="Widdel F."/>
            <person name="Reinhardt R."/>
        </authorList>
    </citation>
    <scope>NUCLEOTIDE SEQUENCE [LARGE SCALE GENOMIC DNA]</scope>
    <source>
        <strain>DSM 19018 / LMG 30748 / EbN1</strain>
    </source>
</reference>
<dbReference type="EC" id="1.6.5.2" evidence="1"/>
<dbReference type="EMBL" id="CR555306">
    <property type="protein sequence ID" value="CAI07397.1"/>
    <property type="molecule type" value="Genomic_DNA"/>
</dbReference>
<dbReference type="RefSeq" id="WP_011237117.1">
    <property type="nucleotide sequence ID" value="NC_006513.1"/>
</dbReference>
<dbReference type="SMR" id="Q5P5L5"/>
<dbReference type="STRING" id="76114.ebA2303"/>
<dbReference type="KEGG" id="eba:ebA2303"/>
<dbReference type="eggNOG" id="COG0655">
    <property type="taxonomic scope" value="Bacteria"/>
</dbReference>
<dbReference type="HOGENOM" id="CLU_051402_0_2_4"/>
<dbReference type="OrthoDB" id="9801479at2"/>
<dbReference type="Proteomes" id="UP000006552">
    <property type="component" value="Chromosome"/>
</dbReference>
<dbReference type="GO" id="GO:0016020">
    <property type="term" value="C:membrane"/>
    <property type="evidence" value="ECO:0007669"/>
    <property type="project" value="TreeGrafter"/>
</dbReference>
<dbReference type="GO" id="GO:0050660">
    <property type="term" value="F:flavin adenine dinucleotide binding"/>
    <property type="evidence" value="ECO:0007669"/>
    <property type="project" value="UniProtKB-UniRule"/>
</dbReference>
<dbReference type="GO" id="GO:0010181">
    <property type="term" value="F:FMN binding"/>
    <property type="evidence" value="ECO:0007669"/>
    <property type="project" value="InterPro"/>
</dbReference>
<dbReference type="GO" id="GO:0051287">
    <property type="term" value="F:NAD binding"/>
    <property type="evidence" value="ECO:0007669"/>
    <property type="project" value="UniProtKB-UniRule"/>
</dbReference>
<dbReference type="GO" id="GO:0050136">
    <property type="term" value="F:NADH:ubiquinone reductase (non-electrogenic) activity"/>
    <property type="evidence" value="ECO:0007669"/>
    <property type="project" value="RHEA"/>
</dbReference>
<dbReference type="GO" id="GO:0050661">
    <property type="term" value="F:NADP binding"/>
    <property type="evidence" value="ECO:0007669"/>
    <property type="project" value="UniProtKB-UniRule"/>
</dbReference>
<dbReference type="GO" id="GO:0008753">
    <property type="term" value="F:NADPH dehydrogenase (quinone) activity"/>
    <property type="evidence" value="ECO:0007669"/>
    <property type="project" value="RHEA"/>
</dbReference>
<dbReference type="FunFam" id="3.40.50.360:FF:000001">
    <property type="entry name" value="NAD(P)H dehydrogenase (Quinone) FQR1-like"/>
    <property type="match status" value="1"/>
</dbReference>
<dbReference type="Gene3D" id="3.40.50.360">
    <property type="match status" value="1"/>
</dbReference>
<dbReference type="HAMAP" id="MF_01017">
    <property type="entry name" value="NQOR"/>
    <property type="match status" value="1"/>
</dbReference>
<dbReference type="InterPro" id="IPR008254">
    <property type="entry name" value="Flavodoxin/NO_synth"/>
</dbReference>
<dbReference type="InterPro" id="IPR029039">
    <property type="entry name" value="Flavoprotein-like_sf"/>
</dbReference>
<dbReference type="InterPro" id="IPR010089">
    <property type="entry name" value="Flavoprotein_WrbA-like"/>
</dbReference>
<dbReference type="InterPro" id="IPR005025">
    <property type="entry name" value="FMN_Rdtase-like_dom"/>
</dbReference>
<dbReference type="InterPro" id="IPR037513">
    <property type="entry name" value="NQO"/>
</dbReference>
<dbReference type="NCBIfam" id="TIGR01755">
    <property type="entry name" value="flav_wrbA"/>
    <property type="match status" value="1"/>
</dbReference>
<dbReference type="NCBIfam" id="NF002999">
    <property type="entry name" value="PRK03767.1"/>
    <property type="match status" value="1"/>
</dbReference>
<dbReference type="PANTHER" id="PTHR30546">
    <property type="entry name" value="FLAVODOXIN-RELATED PROTEIN WRBA-RELATED"/>
    <property type="match status" value="1"/>
</dbReference>
<dbReference type="PANTHER" id="PTHR30546:SF23">
    <property type="entry name" value="FLAVOPROTEIN-LIKE PROTEIN YCP4-RELATED"/>
    <property type="match status" value="1"/>
</dbReference>
<dbReference type="Pfam" id="PF03358">
    <property type="entry name" value="FMN_red"/>
    <property type="match status" value="1"/>
</dbReference>
<dbReference type="SUPFAM" id="SSF52218">
    <property type="entry name" value="Flavoproteins"/>
    <property type="match status" value="1"/>
</dbReference>
<dbReference type="PROSITE" id="PS50902">
    <property type="entry name" value="FLAVODOXIN_LIKE"/>
    <property type="match status" value="1"/>
</dbReference>
<proteinExistence type="inferred from homology"/>
<organism>
    <name type="scientific">Aromatoleum aromaticum (strain DSM 19018 / LMG 30748 / EbN1)</name>
    <name type="common">Azoarcus sp. (strain EbN1)</name>
    <dbReference type="NCBI Taxonomy" id="76114"/>
    <lineage>
        <taxon>Bacteria</taxon>
        <taxon>Pseudomonadati</taxon>
        <taxon>Pseudomonadota</taxon>
        <taxon>Betaproteobacteria</taxon>
        <taxon>Rhodocyclales</taxon>
        <taxon>Rhodocyclaceae</taxon>
        <taxon>Aromatoleum</taxon>
    </lineage>
</organism>
<feature type="chain" id="PRO_0000291005" description="NAD(P)H dehydrogenase (quinone)">
    <location>
        <begin position="1"/>
        <end position="207"/>
    </location>
</feature>
<feature type="domain" description="Flavodoxin-like" evidence="1">
    <location>
        <begin position="3"/>
        <end position="194"/>
    </location>
</feature>
<feature type="binding site" evidence="1">
    <location>
        <begin position="9"/>
        <end position="14"/>
    </location>
    <ligand>
        <name>FMN</name>
        <dbReference type="ChEBI" id="CHEBI:58210"/>
    </ligand>
</feature>
<feature type="binding site" evidence="1">
    <location>
        <position position="11"/>
    </location>
    <ligand>
        <name>NAD(+)</name>
        <dbReference type="ChEBI" id="CHEBI:57540"/>
    </ligand>
</feature>
<feature type="binding site" evidence="1">
    <location>
        <begin position="82"/>
        <end position="84"/>
    </location>
    <ligand>
        <name>FMN</name>
        <dbReference type="ChEBI" id="CHEBI:58210"/>
    </ligand>
</feature>
<feature type="binding site" evidence="1">
    <location>
        <position position="102"/>
    </location>
    <ligand>
        <name>substrate</name>
    </ligand>
</feature>
<feature type="binding site" evidence="1">
    <location>
        <begin position="117"/>
        <end position="123"/>
    </location>
    <ligand>
        <name>FMN</name>
        <dbReference type="ChEBI" id="CHEBI:58210"/>
    </ligand>
</feature>
<feature type="binding site" evidence="1">
    <location>
        <position position="138"/>
    </location>
    <ligand>
        <name>FMN</name>
        <dbReference type="ChEBI" id="CHEBI:58210"/>
    </ligand>
</feature>
<comment type="catalytic activity">
    <reaction evidence="1">
        <text>a quinone + NADH + H(+) = a quinol + NAD(+)</text>
        <dbReference type="Rhea" id="RHEA:46160"/>
        <dbReference type="ChEBI" id="CHEBI:15378"/>
        <dbReference type="ChEBI" id="CHEBI:24646"/>
        <dbReference type="ChEBI" id="CHEBI:57540"/>
        <dbReference type="ChEBI" id="CHEBI:57945"/>
        <dbReference type="ChEBI" id="CHEBI:132124"/>
        <dbReference type="EC" id="1.6.5.2"/>
    </reaction>
</comment>
<comment type="catalytic activity">
    <reaction evidence="1">
        <text>a quinone + NADPH + H(+) = a quinol + NADP(+)</text>
        <dbReference type="Rhea" id="RHEA:46164"/>
        <dbReference type="ChEBI" id="CHEBI:15378"/>
        <dbReference type="ChEBI" id="CHEBI:24646"/>
        <dbReference type="ChEBI" id="CHEBI:57783"/>
        <dbReference type="ChEBI" id="CHEBI:58349"/>
        <dbReference type="ChEBI" id="CHEBI:132124"/>
        <dbReference type="EC" id="1.6.5.2"/>
    </reaction>
</comment>
<comment type="cofactor">
    <cofactor evidence="1">
        <name>FMN</name>
        <dbReference type="ChEBI" id="CHEBI:58210"/>
    </cofactor>
    <text evidence="1">Binds 1 FMN per monomer.</text>
</comment>
<comment type="similarity">
    <text evidence="1">Belongs to the WrbA family.</text>
</comment>
<sequence length="207" mass="22071">MKVQIIFYSMYGHIFRMAEAVAEGARSVAGAEVGLFRVPELVPDEVLEKSGAKTAQQAFAHVPVAKTEQLPEADAIIFGTPTRFGNMCAQMRNFLDQTGGLWMKGSLVGKVGSVFTSTATQHGGQESTILSTHITLLHQGMVLVGLPYTEKRQMGMDEILGGSPYGAATIAGGDGSRMPSQTEIEMAKFQGRHVAEIASALVRGRAA</sequence>
<name>NQOR_AROAE</name>
<evidence type="ECO:0000255" key="1">
    <source>
        <dbReference type="HAMAP-Rule" id="MF_01017"/>
    </source>
</evidence>
<keyword id="KW-0285">Flavoprotein</keyword>
<keyword id="KW-0288">FMN</keyword>
<keyword id="KW-0520">NAD</keyword>
<keyword id="KW-0521">NADP</keyword>
<keyword id="KW-0547">Nucleotide-binding</keyword>
<keyword id="KW-0560">Oxidoreductase</keyword>
<keyword id="KW-1185">Reference proteome</keyword>
<protein>
    <recommendedName>
        <fullName evidence="1">NAD(P)H dehydrogenase (quinone)</fullName>
        <ecNumber evidence="1">1.6.5.2</ecNumber>
    </recommendedName>
    <alternativeName>
        <fullName>Flavoprotein WrbA</fullName>
    </alternativeName>
    <alternativeName>
        <fullName evidence="1">NAD(P)H:quinone oxidoreductase</fullName>
        <shortName evidence="1">NQO</shortName>
    </alternativeName>
</protein>